<accession>Q5PAF6</accession>
<evidence type="ECO:0000255" key="1">
    <source>
        <dbReference type="HAMAP-Rule" id="MF_00291"/>
    </source>
</evidence>
<evidence type="ECO:0000256" key="2">
    <source>
        <dbReference type="SAM" id="MobiDB-lite"/>
    </source>
</evidence>
<evidence type="ECO:0000305" key="3"/>
<proteinExistence type="inferred from homology"/>
<dbReference type="EMBL" id="CP000030">
    <property type="protein sequence ID" value="AAV86724.1"/>
    <property type="status" value="ALT_INIT"/>
    <property type="molecule type" value="Genomic_DNA"/>
</dbReference>
<dbReference type="RefSeq" id="WP_011114434.1">
    <property type="nucleotide sequence ID" value="NZ_AFMU01000051.1"/>
</dbReference>
<dbReference type="SMR" id="Q5PAF6"/>
<dbReference type="GeneID" id="7398030"/>
<dbReference type="KEGG" id="ama:AM792"/>
<dbReference type="PATRIC" id="fig|320483.3.peg.680"/>
<dbReference type="HOGENOM" id="CLU_040318_2_1_5"/>
<dbReference type="GO" id="GO:0022627">
    <property type="term" value="C:cytosolic small ribosomal subunit"/>
    <property type="evidence" value="ECO:0007669"/>
    <property type="project" value="TreeGrafter"/>
</dbReference>
<dbReference type="GO" id="GO:0003735">
    <property type="term" value="F:structural constituent of ribosome"/>
    <property type="evidence" value="ECO:0007669"/>
    <property type="project" value="InterPro"/>
</dbReference>
<dbReference type="GO" id="GO:0006412">
    <property type="term" value="P:translation"/>
    <property type="evidence" value="ECO:0007669"/>
    <property type="project" value="UniProtKB-UniRule"/>
</dbReference>
<dbReference type="CDD" id="cd01425">
    <property type="entry name" value="RPS2"/>
    <property type="match status" value="1"/>
</dbReference>
<dbReference type="Gene3D" id="3.40.50.10490">
    <property type="entry name" value="Glucose-6-phosphate isomerase like protein, domain 1"/>
    <property type="match status" value="1"/>
</dbReference>
<dbReference type="Gene3D" id="1.10.287.610">
    <property type="entry name" value="Helix hairpin bin"/>
    <property type="match status" value="1"/>
</dbReference>
<dbReference type="HAMAP" id="MF_00291_B">
    <property type="entry name" value="Ribosomal_uS2_B"/>
    <property type="match status" value="1"/>
</dbReference>
<dbReference type="InterPro" id="IPR001865">
    <property type="entry name" value="Ribosomal_uS2"/>
</dbReference>
<dbReference type="InterPro" id="IPR005706">
    <property type="entry name" value="Ribosomal_uS2_bac/mit/plastid"/>
</dbReference>
<dbReference type="InterPro" id="IPR018130">
    <property type="entry name" value="Ribosomal_uS2_CS"/>
</dbReference>
<dbReference type="InterPro" id="IPR023591">
    <property type="entry name" value="Ribosomal_uS2_flav_dom_sf"/>
</dbReference>
<dbReference type="NCBIfam" id="TIGR01011">
    <property type="entry name" value="rpsB_bact"/>
    <property type="match status" value="1"/>
</dbReference>
<dbReference type="PANTHER" id="PTHR12534">
    <property type="entry name" value="30S RIBOSOMAL PROTEIN S2 PROKARYOTIC AND ORGANELLAR"/>
    <property type="match status" value="1"/>
</dbReference>
<dbReference type="PANTHER" id="PTHR12534:SF0">
    <property type="entry name" value="SMALL RIBOSOMAL SUBUNIT PROTEIN US2M"/>
    <property type="match status" value="1"/>
</dbReference>
<dbReference type="Pfam" id="PF00318">
    <property type="entry name" value="Ribosomal_S2"/>
    <property type="match status" value="1"/>
</dbReference>
<dbReference type="PRINTS" id="PR00395">
    <property type="entry name" value="RIBOSOMALS2"/>
</dbReference>
<dbReference type="SUPFAM" id="SSF52313">
    <property type="entry name" value="Ribosomal protein S2"/>
    <property type="match status" value="1"/>
</dbReference>
<dbReference type="PROSITE" id="PS00962">
    <property type="entry name" value="RIBOSOMAL_S2_1"/>
    <property type="match status" value="1"/>
</dbReference>
<dbReference type="PROSITE" id="PS00963">
    <property type="entry name" value="RIBOSOMAL_S2_2"/>
    <property type="match status" value="1"/>
</dbReference>
<protein>
    <recommendedName>
        <fullName evidence="1">Small ribosomal subunit protein uS2</fullName>
    </recommendedName>
    <alternativeName>
        <fullName evidence="3">30S ribosomal protein S2</fullName>
    </alternativeName>
</protein>
<reference key="1">
    <citation type="journal article" date="2005" name="Proc. Natl. Acad. Sci. U.S.A.">
        <title>Complete genome sequencing of Anaplasma marginale reveals that the surface is skewed to two superfamilies of outer membrane proteins.</title>
        <authorList>
            <person name="Brayton K.A."/>
            <person name="Kappmeyer L.S."/>
            <person name="Herndon D.R."/>
            <person name="Dark M.J."/>
            <person name="Tibbals D.L."/>
            <person name="Palmer G.H."/>
            <person name="McGuire T.C."/>
            <person name="Knowles D.P. Jr."/>
        </authorList>
    </citation>
    <scope>NUCLEOTIDE SEQUENCE [LARGE SCALE GENOMIC DNA]</scope>
    <source>
        <strain>St. Maries</strain>
    </source>
</reference>
<comment type="similarity">
    <text evidence="1">Belongs to the universal ribosomal protein uS2 family.</text>
</comment>
<comment type="sequence caution" evidence="3">
    <conflict type="erroneous initiation">
        <sequence resource="EMBL-CDS" id="AAV86724"/>
    </conflict>
</comment>
<sequence length="327" mass="35241">MGNLPEFSIRDLVEAGVHLGHKAGRWNPAMAPYIYGVHKYKDIHVIDLRKTLVLLRDALSVLYDVVLKRGRVLFVGTKVQASNIVAEEATRCGQYYVNHRWLGGMLTNWETVSSSIRRLVEFERLINNNEGQFTKKELLMLDKQRGKLERSLGGIREMGGLPHALFVIDTNKEHIAIREANKLKIPVVAILDTNSDPGGVDYPIPGNDDSVRSIDFFCRAVSRTILEAIRSDLASSGVNIAAKGSDVAESYAGTAADAGHTPVSETLSAGGPTAGASPYIPEVGPSVVEVDTHKSAALPDSRPNDADVPAEDGVLPDPGVADGAALE</sequence>
<name>RS2_ANAMM</name>
<gene>
    <name evidence="1" type="primary">rpsB</name>
    <name type="ordered locus">AM792</name>
</gene>
<feature type="chain" id="PRO_0000351977" description="Small ribosomal subunit protein uS2">
    <location>
        <begin position="1"/>
        <end position="327"/>
    </location>
</feature>
<feature type="region of interest" description="Disordered" evidence="2">
    <location>
        <begin position="258"/>
        <end position="327"/>
    </location>
</feature>
<organism>
    <name type="scientific">Anaplasma marginale (strain St. Maries)</name>
    <dbReference type="NCBI Taxonomy" id="234826"/>
    <lineage>
        <taxon>Bacteria</taxon>
        <taxon>Pseudomonadati</taxon>
        <taxon>Pseudomonadota</taxon>
        <taxon>Alphaproteobacteria</taxon>
        <taxon>Rickettsiales</taxon>
        <taxon>Anaplasmataceae</taxon>
        <taxon>Anaplasma</taxon>
    </lineage>
</organism>
<keyword id="KW-0687">Ribonucleoprotein</keyword>
<keyword id="KW-0689">Ribosomal protein</keyword>